<sequence>MNMKKKEKHAIRKKSIGVASVLVGTLIGFGLLSSKEADASENSVTQSDSASNESKSNDSSSVSAAPKTDDTNVSDTKTSSNTNNGETSVAQNPAQQETTQSSSTNATTEETPVTGEATTTTTNQANTPATTQSSNTNAEELVNQTSNETTFNDTNTVSSVNSPQNSTNAENVSTTQDTSTEATPSNNESAPQSTDASNKDVVNQAVNTSAPRMRAFSLAAVAADAPAAGTDITNQLTNVTVGIDSGTTVYPHQAGYVKLNYGFSVPNSAVKGDTFKITVPKELNLNGVTSTAKVPPIMAGDQVLANGVIDSDGNVIYTFTDYVNTKDDVKATLTMPAYIDPENVKKTGNVTLATGIGSTTANKTVLVDYEKYGKFYNLSIKGTIDQIDKTNNTYRQTIYVNPSGDNVIAPVLTGNLKPNTDSNALIDQQNTSIKVYKVDNAADLSESYFVNPENFEDVTNSVNITFPNPNQYKVEFNTPDDQITTPYIVVVNGHIDPNSKGDLALRSTLYGYNSNIIWRSMSWDNEVAFNNGSGSGDGIDKPVVPEQPDEPGEIEPIPEDSDSDPGSDSGSDSNSDSGSDSGSDSTSDSGSDSASDSDSASDSDSASDSDSASDSDSASDSDSDNDSDSDSDSDSDSDSDSDSDSDSDSDSDSDSDSDSDSDSDSDSDSDSDSDSDSDSDSDSDSDSDSDSDSDSDSDSDSDSDSDSDSDSDSDSDSDSDSDSDSDSDSDSDSDSDSDSDSDSDSDSDSDSDSDSDSDSDSDSDSDSASDSDSDSDSDSDSDSDSDSDSDSDSDSDSDSDSDSDSDSESDSDSESDSDSDSDSDSDSDSDSDSDSDSASDSDSGSDSDSSSDSDSESDSNSDSESGSNNNVVPPNSPKNGTNASNKNEAKDSKEPLPDTGSEDEANTSLIWGLLASIGSLLLFRRKKENKDKK</sequence>
<gene>
    <name type="primary">clfA</name>
    <name type="ordered locus">NWMN_0756</name>
</gene>
<keyword id="KW-0002">3D-structure</keyword>
<keyword id="KW-0134">Cell wall</keyword>
<keyword id="KW-0572">Peptidoglycan-anchor</keyword>
<keyword id="KW-0964">Secreted</keyword>
<keyword id="KW-0732">Signal</keyword>
<keyword id="KW-0843">Virulence</keyword>
<accession>Q53653</accession>
<accession>A6QF96</accession>
<proteinExistence type="evidence at protein level"/>
<name>CLFA_STAAE</name>
<comment type="function">
    <text evidence="5 6 7 9">Cell surface-associated protein implicated in virulence. Promotes bacterial attachment exclusively to the gamma-chain of human fibrinogen. Induces formation of bacterial clumps, which diminish the ability of group IIA phospholipase A2 to cause bacterial phospholipid hydrolysis and killing. Significantly decreases macrophage phagocytosis possibly thanks to the clumps, clumped bacteria being too large to be phagocytosed. Dominant factor responsible for human platelet aggregation, which may be an important mechanism for initiating infective endocarditis. Enhances spleen cell proliferative response in vitro, contributing significantly to the immunostimulatory activity of S.aureus.</text>
</comment>
<comment type="subcellular location">
    <subcellularLocation>
        <location evidence="3 10">Secreted</location>
        <location evidence="3 10">Cell wall</location>
        <topology evidence="3">Peptidoglycan-anchor</topology>
    </subcellularLocation>
    <text evidence="1 10">Found in a ring-like distribution on the surface (PubMed:18800056). Anchored to the cell wall by sortase A (By similarity).</text>
</comment>
<comment type="induction">
    <text evidence="7 11">Expressed on cells from both exponential and stationary phases. Up-regulated by sigma-B factor during later growth stages. Sigma-B seems to have a transient enhancing effect on bacterial density in the early stages of infection that it loses during later stages of infection.</text>
</comment>
<comment type="miscellaneous">
    <text>Fg-binding activity is regulated by the divalent cations Ca(2+) and Mn(2+).</text>
</comment>
<comment type="similarity">
    <text evidence="12">Belongs to the serine-aspartate repeat-containing protein (SDr) family.</text>
</comment>
<evidence type="ECO:0000250" key="1">
    <source>
        <dbReference type="UniProtKB" id="Q2G015"/>
    </source>
</evidence>
<evidence type="ECO:0000255" key="2"/>
<evidence type="ECO:0000255" key="3">
    <source>
        <dbReference type="PROSITE-ProRule" id="PRU00477"/>
    </source>
</evidence>
<evidence type="ECO:0000256" key="4">
    <source>
        <dbReference type="SAM" id="MobiDB-lite"/>
    </source>
</evidence>
<evidence type="ECO:0000269" key="5">
    <source>
    </source>
</evidence>
<evidence type="ECO:0000269" key="6">
    <source>
    </source>
</evidence>
<evidence type="ECO:0000269" key="7">
    <source>
    </source>
</evidence>
<evidence type="ECO:0000269" key="8">
    <source>
    </source>
</evidence>
<evidence type="ECO:0000269" key="9">
    <source>
    </source>
</evidence>
<evidence type="ECO:0000269" key="10">
    <source>
    </source>
</evidence>
<evidence type="ECO:0000269" key="11">
    <source>
    </source>
</evidence>
<evidence type="ECO:0000305" key="12"/>
<evidence type="ECO:0000305" key="13">
    <source>
    </source>
</evidence>
<evidence type="ECO:0007829" key="14">
    <source>
        <dbReference type="PDB" id="1N67"/>
    </source>
</evidence>
<evidence type="ECO:0007829" key="15">
    <source>
        <dbReference type="PDB" id="5JQ6"/>
    </source>
</evidence>
<organism>
    <name type="scientific">Staphylococcus aureus (strain Newman)</name>
    <dbReference type="NCBI Taxonomy" id="426430"/>
    <lineage>
        <taxon>Bacteria</taxon>
        <taxon>Bacillati</taxon>
        <taxon>Bacillota</taxon>
        <taxon>Bacilli</taxon>
        <taxon>Bacillales</taxon>
        <taxon>Staphylococcaceae</taxon>
        <taxon>Staphylococcus</taxon>
    </lineage>
</organism>
<feature type="signal peptide" evidence="2">
    <location>
        <begin position="1"/>
        <end position="39"/>
    </location>
</feature>
<feature type="chain" id="PRO_0000041990" description="Clumping factor A">
    <location>
        <begin position="40"/>
        <end position="899"/>
    </location>
</feature>
<feature type="propeptide" id="PRO_0000041991" description="Removed by sortase" evidence="3">
    <location>
        <begin position="900"/>
        <end position="933"/>
    </location>
</feature>
<feature type="region of interest" description="Disordered" evidence="4">
    <location>
        <begin position="34"/>
        <end position="200"/>
    </location>
</feature>
<feature type="region of interest" description="Ligand binding A region">
    <location>
        <begin position="40"/>
        <end position="542"/>
    </location>
</feature>
<feature type="region of interest" description="Disordered" evidence="4">
    <location>
        <begin position="529"/>
        <end position="904"/>
    </location>
</feature>
<feature type="short sequence motif" description="YSIRK-G/S signaling motif" evidence="13">
    <location>
        <begin position="9"/>
        <end position="20"/>
    </location>
</feature>
<feature type="short sequence motif" description="LPXTG sorting signal" evidence="3">
    <location>
        <begin position="896"/>
        <end position="900"/>
    </location>
</feature>
<feature type="compositionally biased region" description="Low complexity" evidence="4">
    <location>
        <begin position="47"/>
        <end position="65"/>
    </location>
</feature>
<feature type="compositionally biased region" description="Polar residues" evidence="4">
    <location>
        <begin position="71"/>
        <end position="105"/>
    </location>
</feature>
<feature type="compositionally biased region" description="Low complexity" evidence="4">
    <location>
        <begin position="106"/>
        <end position="132"/>
    </location>
</feature>
<feature type="compositionally biased region" description="Polar residues" evidence="4">
    <location>
        <begin position="133"/>
        <end position="200"/>
    </location>
</feature>
<feature type="compositionally biased region" description="Acidic residues" evidence="4">
    <location>
        <begin position="547"/>
        <end position="565"/>
    </location>
</feature>
<feature type="compositionally biased region" description="Low complexity" evidence="4">
    <location>
        <begin position="566"/>
        <end position="598"/>
    </location>
</feature>
<feature type="compositionally biased region" description="Acidic residues" evidence="4">
    <location>
        <begin position="599"/>
        <end position="861"/>
    </location>
</feature>
<feature type="compositionally biased region" description="Low complexity" evidence="4">
    <location>
        <begin position="862"/>
        <end position="880"/>
    </location>
</feature>
<feature type="compositionally biased region" description="Basic and acidic residues" evidence="4">
    <location>
        <begin position="887"/>
        <end position="896"/>
    </location>
</feature>
<feature type="modified residue" description="Pentaglycyl murein peptidoglycan amidated threonine" evidence="3">
    <location>
        <position position="899"/>
    </location>
</feature>
<feature type="mutagenesis site" description="Decrease in Fg-binding activity." evidence="8">
    <original>A</original>
    <variation>S</variation>
    <location>
        <position position="254"/>
    </location>
</feature>
<feature type="mutagenesis site" description="Decrease in Fg-binding activity." evidence="8">
    <original>Y</original>
    <variation>A</variation>
    <location>
        <position position="256"/>
    </location>
</feature>
<feature type="mutagenesis site" description="Decrease in gamma-chain peptide-binding activity and in the degree of inhibition induced by Ca(2+). 3-fold decrease in gamma-chain peptide binding activity and decrease in the degree of inhibition induced by Ca(2+); when associated with A-312. Dramatic decrease in gamma-chain peptide-binding activity and decrease in the degree of inhibition induced by Ca(2+); when associated with A-312; A-318 and A-321." evidence="11">
    <original>D</original>
    <variation>A</variation>
    <location>
        <position position="310"/>
    </location>
</feature>
<feature type="mutagenesis site" description="3-fold decrease in gamma-chain peptide binding activity and decrease in the degree of inhibition induced by Ca(2+); when associated with A-310. Dramatic decrease in gamma-chain peptide-binding activity and decrease in the degree of inhibition induced by Ca(2+); when associated with A-310; A-318 and A-321." evidence="11">
    <original>D</original>
    <variation>A</variation>
    <location>
        <position position="312"/>
    </location>
</feature>
<feature type="mutagenesis site" description="Dramatic decrease in gamma-chain peptide-binding activity and decrease in the degree of inhibition induced by Ca(2+); when associated with A-310; A-312 and A-321." evidence="11">
    <original>T</original>
    <variation>A</variation>
    <location>
        <position position="318"/>
    </location>
</feature>
<feature type="mutagenesis site" description="Dramatic decrease in gamma-chain peptide-binding activity and decrease in the degree of inhibition induced by Ca(2+); when associated with A-310; A-312 and A-318." evidence="11">
    <original>D</original>
    <variation>A</variation>
    <location>
        <position position="321"/>
    </location>
</feature>
<feature type="mutagenesis site" description="Decrease in Fg-binding activity." evidence="8">
    <original>P</original>
    <variation>S</variation>
    <location>
        <position position="336"/>
    </location>
</feature>
<feature type="mutagenesis site" description="No Fg-binding." evidence="8">
    <original>Y</original>
    <variation>A</variation>
    <location>
        <position position="338"/>
    </location>
</feature>
<feature type="mutagenesis site" description="Decrease of Fg-binding activity." evidence="8">
    <original>I</original>
    <variation>S</variation>
    <location>
        <position position="387"/>
    </location>
</feature>
<feature type="mutagenesis site" description="Decrease of Fg-binding activity." evidence="8">
    <original>K</original>
    <variation>A</variation>
    <location>
        <position position="389"/>
    </location>
</feature>
<feature type="helix" evidence="14">
    <location>
        <begin position="233"/>
        <end position="235"/>
    </location>
</feature>
<feature type="strand" evidence="14">
    <location>
        <begin position="237"/>
        <end position="244"/>
    </location>
</feature>
<feature type="strand" evidence="14">
    <location>
        <begin position="247"/>
        <end position="249"/>
    </location>
</feature>
<feature type="helix" evidence="15">
    <location>
        <begin position="251"/>
        <end position="253"/>
    </location>
</feature>
<feature type="strand" evidence="14">
    <location>
        <begin position="257"/>
        <end position="264"/>
    </location>
</feature>
<feature type="strand" evidence="14">
    <location>
        <begin position="274"/>
        <end position="278"/>
    </location>
</feature>
<feature type="strand" evidence="14">
    <location>
        <begin position="283"/>
        <end position="289"/>
    </location>
</feature>
<feature type="strand" evidence="14">
    <location>
        <begin position="297"/>
        <end position="299"/>
    </location>
</feature>
<feature type="strand" evidence="14">
    <location>
        <begin position="302"/>
        <end position="309"/>
    </location>
</feature>
<feature type="strand" evidence="14">
    <location>
        <begin position="315"/>
        <end position="319"/>
    </location>
</feature>
<feature type="helix" evidence="14">
    <location>
        <begin position="322"/>
        <end position="325"/>
    </location>
</feature>
<feature type="strand" evidence="14">
    <location>
        <begin position="330"/>
        <end position="339"/>
    </location>
</feature>
<feature type="turn" evidence="14">
    <location>
        <begin position="341"/>
        <end position="343"/>
    </location>
</feature>
<feature type="strand" evidence="14">
    <location>
        <begin position="346"/>
        <end position="356"/>
    </location>
</feature>
<feature type="strand" evidence="14">
    <location>
        <begin position="359"/>
        <end position="367"/>
    </location>
</feature>
<feature type="strand" evidence="14">
    <location>
        <begin position="373"/>
        <end position="375"/>
    </location>
</feature>
<feature type="strand" evidence="14">
    <location>
        <begin position="378"/>
        <end position="382"/>
    </location>
</feature>
<feature type="strand" evidence="14">
    <location>
        <begin position="386"/>
        <end position="388"/>
    </location>
</feature>
<feature type="turn" evidence="14">
    <location>
        <begin position="389"/>
        <end position="392"/>
    </location>
</feature>
<feature type="strand" evidence="14">
    <location>
        <begin position="393"/>
        <end position="400"/>
    </location>
</feature>
<feature type="strand" evidence="14">
    <location>
        <begin position="407"/>
        <end position="416"/>
    </location>
</feature>
<feature type="turn" evidence="14">
    <location>
        <begin position="428"/>
        <end position="430"/>
    </location>
</feature>
<feature type="strand" evidence="14">
    <location>
        <begin position="432"/>
        <end position="439"/>
    </location>
</feature>
<feature type="helix" evidence="14">
    <location>
        <begin position="441"/>
        <end position="443"/>
    </location>
</feature>
<feature type="helix" evidence="14">
    <location>
        <begin position="452"/>
        <end position="454"/>
    </location>
</feature>
<feature type="strand" evidence="14">
    <location>
        <begin position="455"/>
        <end position="457"/>
    </location>
</feature>
<feature type="helix" evidence="14">
    <location>
        <begin position="459"/>
        <end position="461"/>
    </location>
</feature>
<feature type="strand" evidence="14">
    <location>
        <begin position="462"/>
        <end position="468"/>
    </location>
</feature>
<feature type="strand" evidence="14">
    <location>
        <begin position="471"/>
        <end position="475"/>
    </location>
</feature>
<feature type="strand" evidence="14">
    <location>
        <begin position="481"/>
        <end position="483"/>
    </location>
</feature>
<feature type="strand" evidence="14">
    <location>
        <begin position="487"/>
        <end position="495"/>
    </location>
</feature>
<feature type="strand" evidence="15">
    <location>
        <begin position="497"/>
        <end position="499"/>
    </location>
</feature>
<feature type="strand" evidence="14">
    <location>
        <begin position="503"/>
        <end position="512"/>
    </location>
</feature>
<feature type="strand" evidence="14">
    <location>
        <begin position="519"/>
        <end position="527"/>
    </location>
</feature>
<feature type="strand" evidence="14">
    <location>
        <begin position="537"/>
        <end position="543"/>
    </location>
</feature>
<reference key="1">
    <citation type="journal article" date="1994" name="Mol. Microbiol.">
        <title>Molecular characterization of the clumping factor (fibrinogen receptor) of Staphylococcus aureus.</title>
        <authorList>
            <person name="McDevitt D."/>
            <person name="Francois P."/>
            <person name="Vaudaux P."/>
            <person name="Foster T.J."/>
        </authorList>
    </citation>
    <scope>NUCLEOTIDE SEQUENCE [GENOMIC DNA]</scope>
</reference>
<reference key="2">
    <citation type="journal article" date="2008" name="J. Bacteriol.">
        <title>Genome sequence of Staphylococcus aureus strain Newman and comparative analysis of staphylococcal genomes: polymorphism and evolution of two major pathogenicity islands.</title>
        <authorList>
            <person name="Baba T."/>
            <person name="Bae T."/>
            <person name="Schneewind O."/>
            <person name="Takeuchi F."/>
            <person name="Hiramatsu K."/>
        </authorList>
    </citation>
    <scope>NUCLEOTIDE SEQUENCE [LARGE SCALE GENOMIC DNA]</scope>
    <source>
        <strain>Newman</strain>
    </source>
</reference>
<reference key="3">
    <citation type="journal article" date="1998" name="J. Biol. Chem.">
        <title>The fibrinogen-binding MSCRAMM (clumping factor) of Staphylococcus aureus has a Ca2+-dependent inhibitory site.</title>
        <authorList>
            <person name="O'Connell D.P."/>
            <person name="Nanavathy T."/>
            <person name="McDevitt D."/>
            <person name="Gurusiddappa S."/>
            <person name="Hoeoek M."/>
            <person name="Foster T.J."/>
        </authorList>
    </citation>
    <scope>REGULATION</scope>
    <scope>INDUCTION</scope>
    <scope>MUTAGENESIS OF ASP-310; ASP-312; THR-318 AND ASP-321</scope>
</reference>
<reference key="4">
    <citation type="journal article" date="1999" name="Infect. Immun.">
        <title>Antibacterial action of extracellular mammalian group IIA phospholipase A2 against grossly clumped Staphylococcus aureus.</title>
        <authorList>
            <person name="Dominiecki M.E."/>
            <person name="Weiss J."/>
        </authorList>
    </citation>
    <scope>FUNCTION</scope>
</reference>
<reference key="5">
    <citation type="journal article" date="2001" name="Infect. Immun.">
        <title>Clumping factor A mediates binding of Staphylococcus aureus to human platelets.</title>
        <authorList>
            <person name="Siboo I.R."/>
            <person name="Cheung A.L."/>
            <person name="Bayer A.S."/>
            <person name="Sullam P.M."/>
        </authorList>
    </citation>
    <scope>FUNCTION</scope>
    <scope>SUBCELLULAR LOCATION</scope>
</reference>
<reference key="6">
    <citation type="journal article" date="2002" name="Mol. Microbiol.">
        <title>Multiple mechanisms for the activation of human platelet aggregation by Staphylococcus aureus: roles for the clumping factors clfA and clfB, the serine-aspartate repeat protein sdrE and protein A.</title>
        <authorList>
            <person name="O'Brien L.M."/>
            <person name="Kerrigan S.W."/>
            <person name="Kaw G."/>
            <person name="Hogan M."/>
            <person name="Penades J."/>
            <person name="Litt D."/>
            <person name="Fitzgerald D.J."/>
            <person name="Foster T.J."/>
            <person name="Cox D."/>
        </authorList>
    </citation>
    <scope>FUNCTION</scope>
    <scope>REGULATION</scope>
    <scope>INDUCTION</scope>
</reference>
<reference key="7">
    <citation type="journal article" date="2004" name="Microbes Infect.">
        <title>Expression of staphylococcal clumping factor A impedes macrophage phagocytosis.</title>
        <authorList>
            <person name="Palmqvist N."/>
            <person name="Patti J.M."/>
            <person name="Tarkowski A."/>
            <person name="Josefsson E."/>
        </authorList>
    </citation>
    <scope>FUNCTION</scope>
</reference>
<reference key="8">
    <citation type="journal article" date="2005" name="Infect. Immun.">
        <title>Role of sigmaB in the expression of Staphylococcus aureus cell wall adhesins clfA and fnbA and contribution to infectivity in a rat model of experimental endocarditis.</title>
        <authorList>
            <person name="Entenza J.-M."/>
            <person name="Moreillon P."/>
            <person name="Senn M.M."/>
            <person name="Kormanec J."/>
            <person name="Dunman P.M."/>
            <person name="Berger-Baechi B."/>
            <person name="Projan S."/>
            <person name="Bischoff M."/>
        </authorList>
    </citation>
    <scope>REGULATION BY SIGMA-B</scope>
</reference>
<reference key="9">
    <citation type="journal article" date="2008" name="EMBO J.">
        <title>Signal peptides direct surface proteins to two distinct envelope locations of Staphylococcus aureus.</title>
        <authorList>
            <person name="DeDent A."/>
            <person name="Bae T."/>
            <person name="Missiakas D.M."/>
            <person name="Schneewind O."/>
        </authorList>
    </citation>
    <scope>SUBCELLULAR LOCATION</scope>
    <source>
        <strain>Newman</strain>
    </source>
</reference>
<reference key="10">
    <citation type="journal article" date="1999" name="Acta Crystallogr. D">
        <title>Crystallization of ClfA and ClfB fragments: the fibrinogen-binding surface proteins of Staphylococcus aureus.</title>
        <authorList>
            <person name="Deivanayagam C.C.S."/>
            <person name="Perkins S."/>
            <person name="Danthuluri S."/>
            <person name="Owens R.T."/>
            <person name="Bice T."/>
            <person name="Nanavathy T."/>
            <person name="Foster T.J."/>
            <person name="Hoeoek M."/>
            <person name="Narayana S.V.L."/>
        </authorList>
    </citation>
    <scope>CRYSTALLIZATION</scope>
</reference>
<reference key="11">
    <citation type="journal article" date="2002" name="EMBO J.">
        <title>A novel variant of the immunoglobulin fold in surface adhesins of Staphylococcus aureus: crystal structure of the fibrinogen-binding MSCRAMM, clumping factor A.</title>
        <authorList>
            <person name="Deivanayagam C.C.S."/>
            <person name="Wann E.R."/>
            <person name="Chen W."/>
            <person name="Carson M."/>
            <person name="Rajashankar K.R."/>
            <person name="Hoeoek M."/>
            <person name="Narayana S.V."/>
        </authorList>
    </citation>
    <scope>X-RAY CRYSTALLOGRAPHY (1.9 ANGSTROMS) OF 221-559</scope>
    <scope>MUTAGENESIS OF ALA-254; TYR-256; PRO-336; TYR-338; ILE-387 AND LYS-389</scope>
</reference>
<protein>
    <recommendedName>
        <fullName>Clumping factor A</fullName>
    </recommendedName>
    <alternativeName>
        <fullName>Fibrinogen receptor A</fullName>
    </alternativeName>
    <alternativeName>
        <fullName>Fibrinogen-binding protein A</fullName>
    </alternativeName>
</protein>
<dbReference type="EMBL" id="Z18852">
    <property type="protein sequence ID" value="CAA79304.1"/>
    <property type="molecule type" value="Genomic_DNA"/>
</dbReference>
<dbReference type="EMBL" id="AP009351">
    <property type="protein sequence ID" value="BAF67028.1"/>
    <property type="molecule type" value="Genomic_DNA"/>
</dbReference>
<dbReference type="PIR" id="S41539">
    <property type="entry name" value="S41539"/>
</dbReference>
<dbReference type="RefSeq" id="WP_001056178.1">
    <property type="nucleotide sequence ID" value="NZ_JBBIAE010000002.1"/>
</dbReference>
<dbReference type="PDB" id="1N67">
    <property type="method" value="X-ray"/>
    <property type="resolution" value="1.90 A"/>
    <property type="chains" value="A=221-559"/>
</dbReference>
<dbReference type="PDB" id="5JQ6">
    <property type="method" value="X-ray"/>
    <property type="resolution" value="2.40 A"/>
    <property type="chains" value="A=229-545"/>
</dbReference>
<dbReference type="PDBsum" id="1N67"/>
<dbReference type="PDBsum" id="5JQ6"/>
<dbReference type="SMR" id="Q53653"/>
<dbReference type="ChEMBL" id="CHEMBL3856168"/>
<dbReference type="ABCD" id="Q53653">
    <property type="antibodies" value="16 sequenced antibodies"/>
</dbReference>
<dbReference type="KEGG" id="sae:NWMN_0756"/>
<dbReference type="HOGENOM" id="CLU_010159_0_0_9"/>
<dbReference type="EvolutionaryTrace" id="Q53653"/>
<dbReference type="PHI-base" id="PHI:7743"/>
<dbReference type="Proteomes" id="UP000006386">
    <property type="component" value="Chromosome"/>
</dbReference>
<dbReference type="GO" id="GO:0005576">
    <property type="term" value="C:extracellular region"/>
    <property type="evidence" value="ECO:0007669"/>
    <property type="project" value="UniProtKB-KW"/>
</dbReference>
<dbReference type="GO" id="GO:0007155">
    <property type="term" value="P:cell adhesion"/>
    <property type="evidence" value="ECO:0007669"/>
    <property type="project" value="InterPro"/>
</dbReference>
<dbReference type="FunFam" id="2.60.40.1280:FF:000002">
    <property type="entry name" value="Clumping factor A"/>
    <property type="match status" value="1"/>
</dbReference>
<dbReference type="FunFam" id="2.60.40.1290:FF:000001">
    <property type="entry name" value="Clumping factor A"/>
    <property type="match status" value="1"/>
</dbReference>
<dbReference type="Gene3D" id="2.60.40.1280">
    <property type="match status" value="1"/>
</dbReference>
<dbReference type="Gene3D" id="2.60.40.1290">
    <property type="match status" value="1"/>
</dbReference>
<dbReference type="InterPro" id="IPR011266">
    <property type="entry name" value="Adhesin_Fg-bd_dom_2"/>
</dbReference>
<dbReference type="InterPro" id="IPR008966">
    <property type="entry name" value="Adhesion_dom_sf"/>
</dbReference>
<dbReference type="InterPro" id="IPR011252">
    <property type="entry name" value="Fibrogen-bd_dom1"/>
</dbReference>
<dbReference type="InterPro" id="IPR019931">
    <property type="entry name" value="LPXTG_anchor"/>
</dbReference>
<dbReference type="InterPro" id="IPR050972">
    <property type="entry name" value="SDr-like"/>
</dbReference>
<dbReference type="InterPro" id="IPR041171">
    <property type="entry name" value="SDR_Ig"/>
</dbReference>
<dbReference type="InterPro" id="IPR005877">
    <property type="entry name" value="YSIRK_signal_dom"/>
</dbReference>
<dbReference type="NCBIfam" id="TIGR01167">
    <property type="entry name" value="LPXTG_anchor"/>
    <property type="match status" value="1"/>
</dbReference>
<dbReference type="NCBIfam" id="NF033609">
    <property type="entry name" value="MSCRAMM_ClfA"/>
    <property type="match status" value="1"/>
</dbReference>
<dbReference type="NCBIfam" id="TIGR01168">
    <property type="entry name" value="YSIRK_signal"/>
    <property type="match status" value="1"/>
</dbReference>
<dbReference type="PANTHER" id="PTHR34403">
    <property type="entry name" value="TOL-PAL SYSTEM PROTEIN TOLA"/>
    <property type="match status" value="1"/>
</dbReference>
<dbReference type="PANTHER" id="PTHR34403:SF8">
    <property type="entry name" value="TOL-PAL SYSTEM PROTEIN TOLA"/>
    <property type="match status" value="1"/>
</dbReference>
<dbReference type="Pfam" id="PF17961">
    <property type="entry name" value="Big_8"/>
    <property type="match status" value="1"/>
</dbReference>
<dbReference type="Pfam" id="PF00746">
    <property type="entry name" value="Gram_pos_anchor"/>
    <property type="match status" value="1"/>
</dbReference>
<dbReference type="Pfam" id="PF10425">
    <property type="entry name" value="SdrG_C_C"/>
    <property type="match status" value="1"/>
</dbReference>
<dbReference type="Pfam" id="PF04650">
    <property type="entry name" value="YSIRK_signal"/>
    <property type="match status" value="1"/>
</dbReference>
<dbReference type="SUPFAM" id="SSF49401">
    <property type="entry name" value="Bacterial adhesins"/>
    <property type="match status" value="2"/>
</dbReference>
<dbReference type="PROSITE" id="PS50847">
    <property type="entry name" value="GRAM_POS_ANCHORING"/>
    <property type="match status" value="1"/>
</dbReference>